<name>MANA_HYPJR</name>
<protein>
    <recommendedName>
        <fullName>Mannan endo-1,4-beta-mannosidase A</fullName>
        <ecNumber evidence="9 10 11">3.2.1.78</ecNumber>
    </recommendedName>
    <alternativeName>
        <fullName>Beta-mannanase 5A</fullName>
        <shortName evidence="13">Man5A</shortName>
    </alternativeName>
    <alternativeName>
        <fullName evidence="15">Beta-mannanase I/II</fullName>
        <shortName>BMANI</shortName>
        <shortName>BMANII</shortName>
    </alternativeName>
    <alternativeName>
        <fullName>Endo-beta-1,4-mannanase A</fullName>
    </alternativeName>
</protein>
<accession>Q99036</accession>
<accession>A0A024SIJ3</accession>
<proteinExistence type="evidence at protein level"/>
<sequence length="437" mass="47053">MMMLSKSLLSAATAASALAAVLQPVPRASSFVTISGTQFNIDGKVGYFAGTNCYWCSFLTNHADVDSTFSHISSSGLKVVRVWGFNDVNTQPSPGQIWFQKLSATGSTINTGADGLQTLDYVVQSAEQHNLKLIIPFVNNWSDYGGINAYVNAFGGNATTWYTNTAAQTQYRKYVQAVVSRYANSTAIFAWELGNEPRCNGCSTDVIVQWATSVSQYVKSLDSNHLVTLGDEGLGLSTGDGAYPYTYGEGTDFAKNVQIKSLDFGTFHLYPDSWGTNYTWGNGWIQTHAAACLAAGKPCVFEEYGAQQNPCTNEAPWQTTSLTTRGMGGDMFWQWGDTFANGAQSNSDPYTVWYNSSNWQCLVKNHVDAINGGTTTPPPVSSTTTTSSRTSSTPPPPGGSCSPLYGQCGGSGYTGPTCCAQGTCIYSNYWYSQCLNT</sequence>
<gene>
    <name evidence="14" type="primary">man1</name>
</gene>
<evidence type="ECO:0000250" key="1">
    <source>
        <dbReference type="UniProtKB" id="B2B3C0"/>
    </source>
</evidence>
<evidence type="ECO:0000255" key="2"/>
<evidence type="ECO:0000255" key="3">
    <source>
        <dbReference type="PROSITE-ProRule" id="PRU00597"/>
    </source>
</evidence>
<evidence type="ECO:0000256" key="4">
    <source>
        <dbReference type="SAM" id="MobiDB-lite"/>
    </source>
</evidence>
<evidence type="ECO:0000269" key="5">
    <source>
    </source>
</evidence>
<evidence type="ECO:0000269" key="6">
    <source>
    </source>
</evidence>
<evidence type="ECO:0000269" key="7">
    <source>
    </source>
</evidence>
<evidence type="ECO:0000269" key="8">
    <source>
    </source>
</evidence>
<evidence type="ECO:0000269" key="9">
    <source>
    </source>
</evidence>
<evidence type="ECO:0000269" key="10">
    <source ref="3"/>
</evidence>
<evidence type="ECO:0000269" key="11">
    <source ref="4"/>
</evidence>
<evidence type="ECO:0000269" key="12">
    <source ref="7"/>
</evidence>
<evidence type="ECO:0000303" key="13">
    <source>
    </source>
</evidence>
<evidence type="ECO:0000303" key="14">
    <source>
    </source>
</evidence>
<evidence type="ECO:0000303" key="15">
    <source>
    </source>
</evidence>
<evidence type="ECO:0000305" key="16"/>
<evidence type="ECO:0000305" key="17">
    <source>
    </source>
</evidence>
<evidence type="ECO:0000305" key="18">
    <source>
    </source>
</evidence>
<evidence type="ECO:0007744" key="19">
    <source>
        <dbReference type="PDB" id="1QNO"/>
    </source>
</evidence>
<evidence type="ECO:0007744" key="20">
    <source>
        <dbReference type="PDB" id="1QNP"/>
    </source>
</evidence>
<evidence type="ECO:0007744" key="21">
    <source>
        <dbReference type="PDB" id="1QNQ"/>
    </source>
</evidence>
<evidence type="ECO:0007744" key="22">
    <source>
        <dbReference type="PDB" id="1QNR"/>
    </source>
</evidence>
<evidence type="ECO:0007829" key="23">
    <source>
        <dbReference type="PDB" id="1QNR"/>
    </source>
</evidence>
<reference key="1">
    <citation type="journal article" date="1995" name="Appl. Environ. Microbiol.">
        <title>Cloning and expression in Saccharomyces cerevisiae of a Trichoderma reesei beta-mannanase gene containing a cellulose binding domain.</title>
        <authorList>
            <person name="Staalbrand H."/>
            <person name="Saloheimo A."/>
            <person name="Vehmaanperae J."/>
            <person name="Henrissat B."/>
            <person name="Penttilae M."/>
        </authorList>
    </citation>
    <scope>NUCLEOTIDE SEQUENCE [MRNA]</scope>
    <scope>PARTIAL PROTEIN SEQUENCE OF 28-42</scope>
    <source>
        <strain>ATCC 56765 / BCRC 32924 / NRRL 11460 / Rut C-30</strain>
    </source>
</reference>
<reference key="2">
    <citation type="journal article" date="2013" name="Ind. Biotechnol.">
        <title>Comparative genomics analysis of Trichoderma reesei strains.</title>
        <authorList>
            <person name="Koike H."/>
            <person name="Aerts A."/>
            <person name="LaButti K."/>
            <person name="Grigoriev I.V."/>
            <person name="Baker S.E."/>
        </authorList>
    </citation>
    <scope>NUCLEOTIDE SEQUENCE [LARGE SCALE GENOMIC DNA]</scope>
    <source>
        <strain>ATCC 56765 / BCRC 32924 / NRRL 11460 / Rut C-30</strain>
    </source>
</reference>
<reference key="3">
    <citation type="journal article" date="1993" name="Appl. Microbiol. Biotechnol.">
        <title>Purification, and characterization of a beta-mannanase of Trichoderma reesei C-30.</title>
        <authorList>
            <person name="Arisan-Atac I."/>
            <person name="Hodits R."/>
            <person name="Kristufek D."/>
            <person name="Kubicek C.P."/>
        </authorList>
    </citation>
    <scope>FUNCTION</scope>
    <scope>CATALYTIC ACTIVITY</scope>
    <scope>BIOPHYSICOCHEMICAL PROPERTIES</scope>
    <scope>SUBCELLULAR LOCATION</scope>
    <source>
        <strain>ATCC 56765 / BCRC 32924 / NRRL 11460 / Rut C-30</strain>
    </source>
</reference>
<reference key="4">
    <citation type="journal article" date="1993" name="J. Biotechnol.">
        <title>Purification and characterization of two beta-mannanases from Trichoderma reesei.</title>
        <authorList>
            <person name="Staalbrand H."/>
        </authorList>
    </citation>
    <scope>FUNCTION</scope>
    <scope>CATALYTIC ACTIVITY</scope>
    <scope>SUBCELLULAR LOCATION</scope>
    <source>
        <strain>ATCC 56765 / BCRC 32924 / NRRL 11460 / Rut C-30</strain>
    </source>
</reference>
<reference key="5">
    <citation type="journal article" date="1995" name="Eur. J. Biochem.">
        <title>Kinetic and stereochemical studies of manno-oligosaccharide hydrolysis catalysed by beta-mannanases from Trichoderma reesei.</title>
        <authorList>
            <person name="Harjunpaeae V."/>
            <person name="Teleman A."/>
            <person name="Siika-Aho M."/>
            <person name="Drakenberg T."/>
        </authorList>
    </citation>
    <scope>FUNCTION</scope>
    <scope>CATALYTIC ACTIVITY</scope>
</reference>
<reference key="6">
    <citation type="journal article" date="2003" name="J. Biotechnol.">
        <title>A cellulose-binding module of the Trichoderma reesei beta-mannanase Man5A increases the mannan-hydrolysis of complex substrates.</title>
        <authorList>
            <person name="Haegglund P."/>
            <person name="Eriksson T."/>
            <person name="Collen A."/>
            <person name="Nerinckx W."/>
            <person name="Claeyssens M."/>
            <person name="Staalbrand H."/>
        </authorList>
    </citation>
    <scope>DOMAIN</scope>
    <source>
        <strain>ATCC 26921 / CBS 392.92 / QM9414</strain>
    </source>
</reference>
<reference key="7">
    <citation type="journal article" date="2012" name="Biocatal. Biotransformation">
        <title>The role of subsite +2 of the Trichoderma reesei beta-mannanase TrMan5A in hydrolysis and transglycosylation.</title>
        <authorList>
            <person name="Rosengren A."/>
            <person name="Haegglund P."/>
            <person name="Anderson L."/>
            <person name="Pavon-Orozco P."/>
            <person name="Peterson-Wulff R."/>
            <person name="Nerinckx W."/>
            <person name="Staalbrand H."/>
        </authorList>
    </citation>
    <scope>FUNCTION</scope>
    <scope>BIOPHYSICOCHEMICAL PROPERTIES</scope>
    <scope>MUTAGENESIS OF ARG-198</scope>
</reference>
<reference key="8">
    <citation type="journal article" date="2014" name="Appl. Microbiol. Biotechnol.">
        <title>An Aspergillus nidulans beta-mannanase with high transglycosylation capacity revealed through comparative studies within glycosidase family 5.</title>
        <authorList>
            <person name="Rosengren A."/>
            <person name="Reddy S.K."/>
            <person name="Sjoeberg J.S."/>
            <person name="Aurelius O."/>
            <person name="Logan D.T."/>
            <person name="Kolenova K."/>
            <person name="Staalbrand H."/>
        </authorList>
    </citation>
    <scope>FUNCTION</scope>
</reference>
<reference evidence="19 20 21" key="9">
    <citation type="journal article" date="2000" name="Acta Crystallogr. D">
        <title>The three-dimensional structure of a Trichoderma reesei beta-mannanase from glycoside hydrolase family 5.</title>
        <authorList>
            <person name="Sabini E."/>
            <person name="Schubert H."/>
            <person name="Murshudov G."/>
            <person name="Wilson K.S."/>
            <person name="Siika-Aho M."/>
            <person name="Penttila M."/>
        </authorList>
    </citation>
    <scope>X-RAY CRYSTALLOGRAPHY (1.40 ANGSTROMS) OF 28-371 IN COMPLEX WITH MANNOBIOSE</scope>
    <scope>GLYCOSYLATION AT ASN-157; ASN-184; ASN-277 AND ASN-355</scope>
    <scope>DISULFIDE BONDS</scope>
    <scope>ACTIVE SITE</scope>
</reference>
<organism>
    <name type="scientific">Hypocrea jecorina (strain ATCC 56765 / BCRC 32924 / NRRL 11460 / Rut C-30)</name>
    <name type="common">Trichoderma reesei</name>
    <dbReference type="NCBI Taxonomy" id="1344414"/>
    <lineage>
        <taxon>Eukaryota</taxon>
        <taxon>Fungi</taxon>
        <taxon>Dikarya</taxon>
        <taxon>Ascomycota</taxon>
        <taxon>Pezizomycotina</taxon>
        <taxon>Sordariomycetes</taxon>
        <taxon>Hypocreomycetidae</taxon>
        <taxon>Hypocreales</taxon>
        <taxon>Hypocreaceae</taxon>
        <taxon>Trichoderma</taxon>
    </lineage>
</organism>
<comment type="function">
    <text evidence="7 8 9 10 11 12">Endo-1,4-mannanase that catalyzes the random hydrolysis of (1-&gt;4)-beta-D-mannosidic linkages in mannans and heteromannans. It is a crucial enzyme for depolymerization of seed galactomannans and wood galactoglucomannans. Active against locust bean gum and ivory nut mannan, releasing mainly tri- and disaccharides (PubMed:7793911, PubMed:8529653, Ref.3, Ref.4). Also has transglycosylation activity. Transglycosylation of two mannotrioses into a mannohexaose is the major transglycosylation route (PubMed:24950755, PubMed:8529653, Ref.7).</text>
</comment>
<comment type="catalytic activity">
    <reaction evidence="9 10 11">
        <text>Random hydrolysis of (1-&gt;4)-beta-D-mannosidic linkages in mannans, galactomannans and glucomannans.</text>
        <dbReference type="EC" id="3.2.1.78"/>
    </reaction>
</comment>
<comment type="biophysicochemical properties">
    <kinetics>
        <KM evidence="10">0.0015 mg/ml for locust bean gum mannan</KM>
        <KM evidence="12">0.6 mg/ml for locust bean gum mannan</KM>
        <KM evidence="12">0.25 mM for 4-methylumbelliferyl-mannotrioside</KM>
        <KM evidence="12">0.31 mM for mannotetraose</KM>
        <KM evidence="12">0.08 mM for mannopentaose</KM>
        <KM evidence="12">0.05 mM for mannohexaose</KM>
    </kinetics>
    <phDependence>
        <text evidence="10">Optimum pH is 5.0. Stable from pH 2.5 to 7.0.</text>
    </phDependence>
    <temperatureDependence>
        <text evidence="10">Optimum temperature is 75 degrees Celsius.</text>
    </temperatureDependence>
</comment>
<comment type="subunit">
    <text evidence="1">Monomer.</text>
</comment>
<comment type="subcellular location">
    <subcellularLocation>
        <location evidence="10 11">Secreted</location>
    </subcellularLocation>
</comment>
<comment type="domain">
    <text evidence="6 18">The enzyme consists of two functional domains, a catalytic core joined to a carbohydrate-binding domain (CBM) by a serine-, threonine-, and proline-rich, highly glycosylated linker sequence (Probable). The CBM binds to cellulose but not to mannan, and increases the mannan-hydrolysis of complex substrates (PubMed:12523968).</text>
</comment>
<comment type="similarity">
    <text evidence="16">Belongs to the glycosyl hydrolase 5 (cellulase A) family.</text>
</comment>
<dbReference type="EC" id="3.2.1.78" evidence="9 10 11"/>
<dbReference type="EMBL" id="L25310">
    <property type="protein sequence ID" value="AAA34208.1"/>
    <property type="molecule type" value="mRNA"/>
</dbReference>
<dbReference type="EMBL" id="KI911141">
    <property type="protein sequence ID" value="ETS04541.1"/>
    <property type="molecule type" value="Genomic_DNA"/>
</dbReference>
<dbReference type="PDB" id="1QNO">
    <property type="method" value="X-ray"/>
    <property type="resolution" value="2.00 A"/>
    <property type="chains" value="A=28-371"/>
</dbReference>
<dbReference type="PDB" id="1QNP">
    <property type="method" value="X-ray"/>
    <property type="resolution" value="1.50 A"/>
    <property type="chains" value="A=28-371"/>
</dbReference>
<dbReference type="PDB" id="1QNQ">
    <property type="method" value="X-ray"/>
    <property type="resolution" value="1.65 A"/>
    <property type="chains" value="A=28-371"/>
</dbReference>
<dbReference type="PDB" id="1QNR">
    <property type="method" value="X-ray"/>
    <property type="resolution" value="1.40 A"/>
    <property type="chains" value="A=28-371"/>
</dbReference>
<dbReference type="PDB" id="1QNS">
    <property type="method" value="X-ray"/>
    <property type="resolution" value="1.50 A"/>
    <property type="chains" value="A=28-371"/>
</dbReference>
<dbReference type="PDBsum" id="1QNO"/>
<dbReference type="PDBsum" id="1QNP"/>
<dbReference type="PDBsum" id="1QNQ"/>
<dbReference type="PDBsum" id="1QNR"/>
<dbReference type="PDBsum" id="1QNS"/>
<dbReference type="SMR" id="Q99036"/>
<dbReference type="CAZy" id="CBM1">
    <property type="family name" value="Carbohydrate-Binding Module Family 1"/>
</dbReference>
<dbReference type="CAZy" id="GH5">
    <property type="family name" value="Glycoside Hydrolase Family 5"/>
</dbReference>
<dbReference type="GlyCosmos" id="Q99036">
    <property type="glycosylation" value="4 sites, No reported glycans"/>
</dbReference>
<dbReference type="iPTMnet" id="Q99036"/>
<dbReference type="KEGG" id="trr:M419DRAFT_122377"/>
<dbReference type="OrthoDB" id="10367at5129"/>
<dbReference type="BRENDA" id="3.2.1.78">
    <property type="organism ID" value="6451"/>
</dbReference>
<dbReference type="EvolutionaryTrace" id="Q99036"/>
<dbReference type="Proteomes" id="UP000024376">
    <property type="component" value="Unassembled WGS sequence"/>
</dbReference>
<dbReference type="GO" id="GO:0005576">
    <property type="term" value="C:extracellular region"/>
    <property type="evidence" value="ECO:0007669"/>
    <property type="project" value="UniProtKB-SubCell"/>
</dbReference>
<dbReference type="GO" id="GO:0030248">
    <property type="term" value="F:cellulose binding"/>
    <property type="evidence" value="ECO:0007669"/>
    <property type="project" value="InterPro"/>
</dbReference>
<dbReference type="GO" id="GO:0048030">
    <property type="term" value="F:disaccharide binding"/>
    <property type="evidence" value="ECO:0000314"/>
    <property type="project" value="UniProtKB"/>
</dbReference>
<dbReference type="GO" id="GO:0016985">
    <property type="term" value="F:mannan endo-1,4-beta-mannosidase activity"/>
    <property type="evidence" value="ECO:0000314"/>
    <property type="project" value="UniProtKB"/>
</dbReference>
<dbReference type="GO" id="GO:0046355">
    <property type="term" value="P:mannan catabolic process"/>
    <property type="evidence" value="ECO:0000314"/>
    <property type="project" value="UniProtKB"/>
</dbReference>
<dbReference type="FunFam" id="3.20.20.80:FF:000076">
    <property type="entry name" value="Mannan endo-1,4-beta-mannosidase A"/>
    <property type="match status" value="1"/>
</dbReference>
<dbReference type="Gene3D" id="3.20.20.80">
    <property type="entry name" value="Glycosidases"/>
    <property type="match status" value="1"/>
</dbReference>
<dbReference type="InterPro" id="IPR035971">
    <property type="entry name" value="CBD_sf"/>
</dbReference>
<dbReference type="InterPro" id="IPR000254">
    <property type="entry name" value="Cellulose-bd_dom_fun"/>
</dbReference>
<dbReference type="InterPro" id="IPR001547">
    <property type="entry name" value="Glyco_hydro_5"/>
</dbReference>
<dbReference type="InterPro" id="IPR017853">
    <property type="entry name" value="Glycoside_hydrolase_SF"/>
</dbReference>
<dbReference type="InterPro" id="IPR045053">
    <property type="entry name" value="MAN-like"/>
</dbReference>
<dbReference type="PANTHER" id="PTHR31451">
    <property type="match status" value="1"/>
</dbReference>
<dbReference type="PANTHER" id="PTHR31451:SF39">
    <property type="entry name" value="MANNAN ENDO-1,4-BETA-MANNOSIDASE 1"/>
    <property type="match status" value="1"/>
</dbReference>
<dbReference type="Pfam" id="PF00734">
    <property type="entry name" value="CBM_1"/>
    <property type="match status" value="1"/>
</dbReference>
<dbReference type="Pfam" id="PF00150">
    <property type="entry name" value="Cellulase"/>
    <property type="match status" value="1"/>
</dbReference>
<dbReference type="SMART" id="SM00236">
    <property type="entry name" value="fCBD"/>
    <property type="match status" value="1"/>
</dbReference>
<dbReference type="SUPFAM" id="SSF51445">
    <property type="entry name" value="(Trans)glycosidases"/>
    <property type="match status" value="1"/>
</dbReference>
<dbReference type="SUPFAM" id="SSF57180">
    <property type="entry name" value="Cellulose-binding domain"/>
    <property type="match status" value="1"/>
</dbReference>
<dbReference type="PROSITE" id="PS00562">
    <property type="entry name" value="CBM1_1"/>
    <property type="match status" value="1"/>
</dbReference>
<dbReference type="PROSITE" id="PS51164">
    <property type="entry name" value="CBM1_2"/>
    <property type="match status" value="1"/>
</dbReference>
<keyword id="KW-0002">3D-structure</keyword>
<keyword id="KW-0903">Direct protein sequencing</keyword>
<keyword id="KW-1015">Disulfide bond</keyword>
<keyword id="KW-0325">Glycoprotein</keyword>
<keyword id="KW-0326">Glycosidase</keyword>
<keyword id="KW-0378">Hydrolase</keyword>
<keyword id="KW-0964">Secreted</keyword>
<keyword id="KW-0732">Signal</keyword>
<feature type="signal peptide" evidence="2">
    <location>
        <begin position="1"/>
        <end position="19"/>
    </location>
</feature>
<feature type="propeptide" id="PRO_0000441278" evidence="8">
    <location>
        <begin position="20"/>
        <end position="27"/>
    </location>
</feature>
<feature type="chain" id="PRO_5004322683" description="Mannan endo-1,4-beta-mannosidase A">
    <location>
        <begin position="28"/>
        <end position="437"/>
    </location>
</feature>
<feature type="domain" description="CBM1" evidence="3">
    <location>
        <begin position="400"/>
        <end position="435"/>
    </location>
</feature>
<feature type="region of interest" description="Catalytic" evidence="18">
    <location>
        <begin position="28"/>
        <end position="376"/>
    </location>
</feature>
<feature type="region of interest" description="Disordered" evidence="4">
    <location>
        <begin position="372"/>
        <end position="399"/>
    </location>
</feature>
<feature type="region of interest" description="Linker" evidence="18">
    <location>
        <begin position="377"/>
        <end position="399"/>
    </location>
</feature>
<feature type="compositionally biased region" description="Low complexity" evidence="4">
    <location>
        <begin position="381"/>
        <end position="392"/>
    </location>
</feature>
<feature type="active site" description="Proton donor/acceptor" evidence="17">
    <location>
        <position position="196"/>
    </location>
</feature>
<feature type="active site" description="Nucleophile" evidence="17">
    <location>
        <position position="303"/>
    </location>
</feature>
<feature type="binding site" evidence="5 22">
    <location>
        <begin position="196"/>
        <end position="198"/>
    </location>
    <ligand>
        <name>substrate</name>
    </ligand>
</feature>
<feature type="binding site" evidence="5 22">
    <location>
        <position position="232"/>
    </location>
    <ligand>
        <name>substrate</name>
    </ligand>
</feature>
<feature type="binding site" evidence="5 22">
    <location>
        <position position="274"/>
    </location>
    <ligand>
        <name>substrate</name>
    </ligand>
</feature>
<feature type="site" description="Important for transglycosylation activity" evidence="12">
    <location>
        <position position="198"/>
    </location>
</feature>
<feature type="glycosylation site" description="N-linked (GlcNAc...) asparagine" evidence="5 19 20 21">
    <location>
        <position position="157"/>
    </location>
</feature>
<feature type="glycosylation site" description="N-linked (GlcNAc...) asparagine" evidence="5 19 20 21">
    <location>
        <position position="184"/>
    </location>
</feature>
<feature type="glycosylation site" description="N-linked (GlcNAc...) asparagine" evidence="5 19 20 21">
    <location>
        <position position="277"/>
    </location>
</feature>
<feature type="glycosylation site" description="N-linked (GlcNAc...) asparagine" evidence="5 19 20 21">
    <location>
        <position position="355"/>
    </location>
</feature>
<feature type="disulfide bond" evidence="5 19 20 21">
    <location>
        <begin position="53"/>
        <end position="56"/>
    </location>
</feature>
<feature type="disulfide bond" evidence="5 19 20 21">
    <location>
        <begin position="199"/>
        <end position="202"/>
    </location>
</feature>
<feature type="disulfide bond" evidence="5 19 20 21">
    <location>
        <begin position="292"/>
        <end position="299"/>
    </location>
</feature>
<feature type="disulfide bond" evidence="5 19 20 21">
    <location>
        <begin position="311"/>
        <end position="361"/>
    </location>
</feature>
<feature type="mutagenesis site" description="Shows an altered product profile, producing mannotriose and mannose from mannotetraose, compared to predominantly mannobiose in the wild type." evidence="12">
    <original>R</original>
    <variation>K</variation>
    <location>
        <position position="198"/>
    </location>
</feature>
<feature type="strand" evidence="23">
    <location>
        <begin position="33"/>
        <end position="35"/>
    </location>
</feature>
<feature type="strand" evidence="23">
    <location>
        <begin position="38"/>
        <end position="41"/>
    </location>
</feature>
<feature type="strand" evidence="23">
    <location>
        <begin position="44"/>
        <end position="46"/>
    </location>
</feature>
<feature type="strand" evidence="23">
    <location>
        <begin position="48"/>
        <end position="52"/>
    </location>
</feature>
<feature type="helix" evidence="23">
    <location>
        <begin position="54"/>
        <end position="58"/>
    </location>
</feature>
<feature type="helix" evidence="23">
    <location>
        <begin position="62"/>
        <end position="74"/>
    </location>
</feature>
<feature type="strand" evidence="23">
    <location>
        <begin position="79"/>
        <end position="81"/>
    </location>
</feature>
<feature type="strand" evidence="23">
    <location>
        <begin position="87"/>
        <end position="90"/>
    </location>
</feature>
<feature type="strand" evidence="23">
    <location>
        <begin position="99"/>
        <end position="101"/>
    </location>
</feature>
<feature type="turn" evidence="23">
    <location>
        <begin position="113"/>
        <end position="116"/>
    </location>
</feature>
<feature type="helix" evidence="23">
    <location>
        <begin position="117"/>
        <end position="129"/>
    </location>
</feature>
<feature type="strand" evidence="23">
    <location>
        <begin position="132"/>
        <end position="137"/>
    </location>
</feature>
<feature type="strand" evidence="23">
    <location>
        <begin position="139"/>
        <end position="142"/>
    </location>
</feature>
<feature type="helix" evidence="23">
    <location>
        <begin position="146"/>
        <end position="154"/>
    </location>
</feature>
<feature type="helix" evidence="23">
    <location>
        <begin position="160"/>
        <end position="163"/>
    </location>
</feature>
<feature type="helix" evidence="23">
    <location>
        <begin position="165"/>
        <end position="182"/>
    </location>
</feature>
<feature type="strand" evidence="23">
    <location>
        <begin position="188"/>
        <end position="193"/>
    </location>
</feature>
<feature type="helix" evidence="23">
    <location>
        <begin position="205"/>
        <end position="221"/>
    </location>
</feature>
<feature type="strand" evidence="23">
    <location>
        <begin position="223"/>
        <end position="228"/>
    </location>
</feature>
<feature type="helix" evidence="23">
    <location>
        <begin position="243"/>
        <end position="245"/>
    </location>
</feature>
<feature type="strand" evidence="23">
    <location>
        <begin position="246"/>
        <end position="250"/>
    </location>
</feature>
<feature type="helix" evidence="23">
    <location>
        <begin position="253"/>
        <end position="257"/>
    </location>
</feature>
<feature type="strand" evidence="23">
    <location>
        <begin position="264"/>
        <end position="269"/>
    </location>
</feature>
<feature type="helix" evidence="23">
    <location>
        <begin position="271"/>
        <end position="274"/>
    </location>
</feature>
<feature type="helix" evidence="23">
    <location>
        <begin position="281"/>
        <end position="294"/>
    </location>
</feature>
<feature type="strand" evidence="23">
    <location>
        <begin position="299"/>
        <end position="304"/>
    </location>
</feature>
<feature type="helix" evidence="23">
    <location>
        <begin position="310"/>
        <end position="322"/>
    </location>
</feature>
<feature type="strand" evidence="23">
    <location>
        <begin position="327"/>
        <end position="333"/>
    </location>
</feature>
<feature type="helix" evidence="23">
    <location>
        <begin position="357"/>
        <end position="362"/>
    </location>
</feature>
<feature type="helix" evidence="23">
    <location>
        <begin position="364"/>
        <end position="370"/>
    </location>
</feature>